<name>SECA_WOLSU</name>
<gene>
    <name evidence="1" type="primary">secA</name>
    <name type="ordered locus">WS1258</name>
</gene>
<reference key="1">
    <citation type="journal article" date="2003" name="Proc. Natl. Acad. Sci. U.S.A.">
        <title>Complete genome sequence and analysis of Wolinella succinogenes.</title>
        <authorList>
            <person name="Baar C."/>
            <person name="Eppinger M."/>
            <person name="Raddatz G."/>
            <person name="Simon J."/>
            <person name="Lanz C."/>
            <person name="Klimmek O."/>
            <person name="Nandakumar R."/>
            <person name="Gross R."/>
            <person name="Rosinus A."/>
            <person name="Keller H."/>
            <person name="Jagtap P."/>
            <person name="Linke B."/>
            <person name="Meyer F."/>
            <person name="Lederer H."/>
            <person name="Schuster S.C."/>
        </authorList>
    </citation>
    <scope>NUCLEOTIDE SEQUENCE [LARGE SCALE GENOMIC DNA]</scope>
    <source>
        <strain>ATCC 29543 / DSM 1740 / CCUG 13145 / JCM 31913 / LMG 7466 / NCTC 11488 / FDC 602W</strain>
    </source>
</reference>
<accession>Q7M919</accession>
<proteinExistence type="inferred from homology"/>
<keyword id="KW-0067">ATP-binding</keyword>
<keyword id="KW-0997">Cell inner membrane</keyword>
<keyword id="KW-1003">Cell membrane</keyword>
<keyword id="KW-0963">Cytoplasm</keyword>
<keyword id="KW-0472">Membrane</keyword>
<keyword id="KW-0479">Metal-binding</keyword>
<keyword id="KW-0547">Nucleotide-binding</keyword>
<keyword id="KW-0653">Protein transport</keyword>
<keyword id="KW-1185">Reference proteome</keyword>
<keyword id="KW-1278">Translocase</keyword>
<keyword id="KW-0811">Translocation</keyword>
<keyword id="KW-0813">Transport</keyword>
<keyword id="KW-0862">Zinc</keyword>
<protein>
    <recommendedName>
        <fullName evidence="1">Protein translocase subunit SecA</fullName>
        <ecNumber evidence="1">7.4.2.8</ecNumber>
    </recommendedName>
</protein>
<evidence type="ECO:0000255" key="1">
    <source>
        <dbReference type="HAMAP-Rule" id="MF_01382"/>
    </source>
</evidence>
<evidence type="ECO:0000256" key="2">
    <source>
        <dbReference type="SAM" id="MobiDB-lite"/>
    </source>
</evidence>
<comment type="function">
    <text evidence="1">Part of the Sec protein translocase complex. Interacts with the SecYEG preprotein conducting channel. Has a central role in coupling the hydrolysis of ATP to the transfer of proteins into and across the cell membrane, serving as an ATP-driven molecular motor driving the stepwise translocation of polypeptide chains across the membrane.</text>
</comment>
<comment type="catalytic activity">
    <reaction evidence="1">
        <text>ATP + H2O + cellular proteinSide 1 = ADP + phosphate + cellular proteinSide 2.</text>
        <dbReference type="EC" id="7.4.2.8"/>
    </reaction>
</comment>
<comment type="cofactor">
    <cofactor evidence="1">
        <name>Zn(2+)</name>
        <dbReference type="ChEBI" id="CHEBI:29105"/>
    </cofactor>
    <text evidence="1">May bind 1 zinc ion per subunit.</text>
</comment>
<comment type="subunit">
    <text evidence="1">Monomer and homodimer. Part of the essential Sec protein translocation apparatus which comprises SecA, SecYEG and auxiliary proteins SecDF-YajC and YidC.</text>
</comment>
<comment type="subcellular location">
    <subcellularLocation>
        <location evidence="1">Cell inner membrane</location>
        <topology evidence="1">Peripheral membrane protein</topology>
        <orientation evidence="1">Cytoplasmic side</orientation>
    </subcellularLocation>
    <subcellularLocation>
        <location evidence="1">Cytoplasm</location>
    </subcellularLocation>
    <text evidence="1">Distribution is 50-50.</text>
</comment>
<comment type="similarity">
    <text evidence="1">Belongs to the SecA family.</text>
</comment>
<feature type="chain" id="PRO_0000321041" description="Protein translocase subunit SecA">
    <location>
        <begin position="1"/>
        <end position="859"/>
    </location>
</feature>
<feature type="region of interest" description="Disordered" evidence="2">
    <location>
        <begin position="818"/>
        <end position="838"/>
    </location>
</feature>
<feature type="binding site" evidence="1">
    <location>
        <position position="88"/>
    </location>
    <ligand>
        <name>ATP</name>
        <dbReference type="ChEBI" id="CHEBI:30616"/>
    </ligand>
</feature>
<feature type="binding site" evidence="1">
    <location>
        <begin position="106"/>
        <end position="110"/>
    </location>
    <ligand>
        <name>ATP</name>
        <dbReference type="ChEBI" id="CHEBI:30616"/>
    </ligand>
</feature>
<feature type="binding site" evidence="1">
    <location>
        <position position="496"/>
    </location>
    <ligand>
        <name>ATP</name>
        <dbReference type="ChEBI" id="CHEBI:30616"/>
    </ligand>
</feature>
<feature type="binding site" evidence="1">
    <location>
        <position position="834"/>
    </location>
    <ligand>
        <name>Zn(2+)</name>
        <dbReference type="ChEBI" id="CHEBI:29105"/>
    </ligand>
</feature>
<feature type="binding site" evidence="1">
    <location>
        <position position="836"/>
    </location>
    <ligand>
        <name>Zn(2+)</name>
        <dbReference type="ChEBI" id="CHEBI:29105"/>
    </ligand>
</feature>
<feature type="binding site" evidence="1">
    <location>
        <position position="845"/>
    </location>
    <ligand>
        <name>Zn(2+)</name>
        <dbReference type="ChEBI" id="CHEBI:29105"/>
    </ligand>
</feature>
<feature type="binding site" evidence="1">
    <location>
        <position position="846"/>
    </location>
    <ligand>
        <name>Zn(2+)</name>
        <dbReference type="ChEBI" id="CHEBI:29105"/>
    </ligand>
</feature>
<dbReference type="EC" id="7.4.2.8" evidence="1"/>
<dbReference type="EMBL" id="BX571660">
    <property type="protein sequence ID" value="CAE10337.1"/>
    <property type="molecule type" value="Genomic_DNA"/>
</dbReference>
<dbReference type="RefSeq" id="WP_011139124.1">
    <property type="nucleotide sequence ID" value="NC_005090.1"/>
</dbReference>
<dbReference type="SMR" id="Q7M919"/>
<dbReference type="STRING" id="273121.WS1258"/>
<dbReference type="KEGG" id="wsu:WS1258"/>
<dbReference type="eggNOG" id="COG0653">
    <property type="taxonomic scope" value="Bacteria"/>
</dbReference>
<dbReference type="HOGENOM" id="CLU_005314_3_0_7"/>
<dbReference type="Proteomes" id="UP000000422">
    <property type="component" value="Chromosome"/>
</dbReference>
<dbReference type="GO" id="GO:0031522">
    <property type="term" value="C:cell envelope Sec protein transport complex"/>
    <property type="evidence" value="ECO:0007669"/>
    <property type="project" value="TreeGrafter"/>
</dbReference>
<dbReference type="GO" id="GO:0005829">
    <property type="term" value="C:cytosol"/>
    <property type="evidence" value="ECO:0007669"/>
    <property type="project" value="TreeGrafter"/>
</dbReference>
<dbReference type="GO" id="GO:0005886">
    <property type="term" value="C:plasma membrane"/>
    <property type="evidence" value="ECO:0007669"/>
    <property type="project" value="UniProtKB-SubCell"/>
</dbReference>
<dbReference type="GO" id="GO:0005524">
    <property type="term" value="F:ATP binding"/>
    <property type="evidence" value="ECO:0007669"/>
    <property type="project" value="UniProtKB-UniRule"/>
</dbReference>
<dbReference type="GO" id="GO:0046872">
    <property type="term" value="F:metal ion binding"/>
    <property type="evidence" value="ECO:0007669"/>
    <property type="project" value="UniProtKB-KW"/>
</dbReference>
<dbReference type="GO" id="GO:0008564">
    <property type="term" value="F:protein-exporting ATPase activity"/>
    <property type="evidence" value="ECO:0007669"/>
    <property type="project" value="UniProtKB-EC"/>
</dbReference>
<dbReference type="GO" id="GO:0065002">
    <property type="term" value="P:intracellular protein transmembrane transport"/>
    <property type="evidence" value="ECO:0007669"/>
    <property type="project" value="UniProtKB-UniRule"/>
</dbReference>
<dbReference type="GO" id="GO:0017038">
    <property type="term" value="P:protein import"/>
    <property type="evidence" value="ECO:0007669"/>
    <property type="project" value="InterPro"/>
</dbReference>
<dbReference type="GO" id="GO:0006605">
    <property type="term" value="P:protein targeting"/>
    <property type="evidence" value="ECO:0007669"/>
    <property type="project" value="UniProtKB-UniRule"/>
</dbReference>
<dbReference type="GO" id="GO:0043952">
    <property type="term" value="P:protein transport by the Sec complex"/>
    <property type="evidence" value="ECO:0007669"/>
    <property type="project" value="TreeGrafter"/>
</dbReference>
<dbReference type="CDD" id="cd17928">
    <property type="entry name" value="DEXDc_SecA"/>
    <property type="match status" value="1"/>
</dbReference>
<dbReference type="CDD" id="cd18803">
    <property type="entry name" value="SF2_C_secA"/>
    <property type="match status" value="1"/>
</dbReference>
<dbReference type="FunFam" id="3.40.50.300:FF:000429">
    <property type="entry name" value="Preprotein translocase subunit SecA"/>
    <property type="match status" value="1"/>
</dbReference>
<dbReference type="FunFam" id="3.90.1440.10:FF:000001">
    <property type="entry name" value="Preprotein translocase subunit SecA"/>
    <property type="match status" value="1"/>
</dbReference>
<dbReference type="Gene3D" id="1.10.3060.10">
    <property type="entry name" value="Helical scaffold and wing domains of SecA"/>
    <property type="match status" value="1"/>
</dbReference>
<dbReference type="Gene3D" id="3.40.50.300">
    <property type="entry name" value="P-loop containing nucleotide triphosphate hydrolases"/>
    <property type="match status" value="3"/>
</dbReference>
<dbReference type="Gene3D" id="3.90.1440.10">
    <property type="entry name" value="SecA, preprotein cross-linking domain"/>
    <property type="match status" value="1"/>
</dbReference>
<dbReference type="HAMAP" id="MF_01382">
    <property type="entry name" value="SecA"/>
    <property type="match status" value="1"/>
</dbReference>
<dbReference type="InterPro" id="IPR014001">
    <property type="entry name" value="Helicase_ATP-bd"/>
</dbReference>
<dbReference type="InterPro" id="IPR001650">
    <property type="entry name" value="Helicase_C-like"/>
</dbReference>
<dbReference type="InterPro" id="IPR027417">
    <property type="entry name" value="P-loop_NTPase"/>
</dbReference>
<dbReference type="InterPro" id="IPR004027">
    <property type="entry name" value="SEC_C_motif"/>
</dbReference>
<dbReference type="InterPro" id="IPR000185">
    <property type="entry name" value="SecA"/>
</dbReference>
<dbReference type="InterPro" id="IPR011115">
    <property type="entry name" value="SecA_DEAD"/>
</dbReference>
<dbReference type="InterPro" id="IPR014018">
    <property type="entry name" value="SecA_motor_DEAD"/>
</dbReference>
<dbReference type="InterPro" id="IPR011130">
    <property type="entry name" value="SecA_preprotein_X-link_dom"/>
</dbReference>
<dbReference type="InterPro" id="IPR044722">
    <property type="entry name" value="SecA_SF2_C"/>
</dbReference>
<dbReference type="InterPro" id="IPR011116">
    <property type="entry name" value="SecA_Wing/Scaffold"/>
</dbReference>
<dbReference type="InterPro" id="IPR036266">
    <property type="entry name" value="SecA_Wing/Scaffold_sf"/>
</dbReference>
<dbReference type="InterPro" id="IPR036670">
    <property type="entry name" value="SecA_X-link_sf"/>
</dbReference>
<dbReference type="NCBIfam" id="NF006630">
    <property type="entry name" value="PRK09200.1"/>
    <property type="match status" value="1"/>
</dbReference>
<dbReference type="NCBIfam" id="NF009538">
    <property type="entry name" value="PRK12904.1"/>
    <property type="match status" value="1"/>
</dbReference>
<dbReference type="NCBIfam" id="TIGR00963">
    <property type="entry name" value="secA"/>
    <property type="match status" value="1"/>
</dbReference>
<dbReference type="PANTHER" id="PTHR30612:SF0">
    <property type="entry name" value="CHLOROPLAST PROTEIN-TRANSPORTING ATPASE"/>
    <property type="match status" value="1"/>
</dbReference>
<dbReference type="PANTHER" id="PTHR30612">
    <property type="entry name" value="SECA INNER MEMBRANE COMPONENT OF SEC PROTEIN SECRETION SYSTEM"/>
    <property type="match status" value="1"/>
</dbReference>
<dbReference type="Pfam" id="PF21090">
    <property type="entry name" value="P-loop_SecA"/>
    <property type="match status" value="1"/>
</dbReference>
<dbReference type="Pfam" id="PF02810">
    <property type="entry name" value="SEC-C"/>
    <property type="match status" value="1"/>
</dbReference>
<dbReference type="Pfam" id="PF07517">
    <property type="entry name" value="SecA_DEAD"/>
    <property type="match status" value="1"/>
</dbReference>
<dbReference type="Pfam" id="PF01043">
    <property type="entry name" value="SecA_PP_bind"/>
    <property type="match status" value="1"/>
</dbReference>
<dbReference type="Pfam" id="PF07516">
    <property type="entry name" value="SecA_SW"/>
    <property type="match status" value="1"/>
</dbReference>
<dbReference type="PRINTS" id="PR00906">
    <property type="entry name" value="SECA"/>
</dbReference>
<dbReference type="SMART" id="SM00957">
    <property type="entry name" value="SecA_DEAD"/>
    <property type="match status" value="1"/>
</dbReference>
<dbReference type="SMART" id="SM00958">
    <property type="entry name" value="SecA_PP_bind"/>
    <property type="match status" value="1"/>
</dbReference>
<dbReference type="SUPFAM" id="SSF81886">
    <property type="entry name" value="Helical scaffold and wing domains of SecA"/>
    <property type="match status" value="1"/>
</dbReference>
<dbReference type="SUPFAM" id="SSF52540">
    <property type="entry name" value="P-loop containing nucleoside triphosphate hydrolases"/>
    <property type="match status" value="2"/>
</dbReference>
<dbReference type="SUPFAM" id="SSF81767">
    <property type="entry name" value="Pre-protein crosslinking domain of SecA"/>
    <property type="match status" value="1"/>
</dbReference>
<dbReference type="PROSITE" id="PS51196">
    <property type="entry name" value="SECA_MOTOR_DEAD"/>
    <property type="match status" value="1"/>
</dbReference>
<sequence>MITQLTRKIFGTKNDKLVKKYRQRAQKINELEAKYQVMSDEALKSAFTSLKESVQKGEKSLDDVLYDSFAITREASKRVLGMRHFDVQLVGGMVLHEGRIAEMKTGEGKTLVATLAVALNAMKGEGVHVVTVNDYLAKRDATEMGVLYSFLGYSVGVITGDLYGDSERLEQYSSDVVYGTNNEFGFDYLRDNMKYSLEEKVQKSHAFAIVDEVDSILIDEARTPLIISGPANRKLDNYKIANSVALSLQKEKHFTVDEKNRVILLTEEGIREAEKGFGVDNLYSIENAILSHHLDQALKANHLFAIDKDYVINNGEVVIVDEFTGRLSEGRRFSEGLHQALEAKEGVEIKEESQTLADITFQNYFRLYKKLAGMTGTAQTEASEFLQIYKLEVISIPTNVTVMRKDLNDLIYKTEREKFNAVIQKIKELNQKGQPVLVGTASIEKSELLHSLLQKERIPHTVLNAKQHAKEAEIIKDAGKKGAVTIATNMAGRGVDIKIDDEIRSLGGLYIIGTERHESRRIDNQLRGRSGRQGDPGASQFYLSLEDNLLRIFGSDKIKNIMDKLGLAEGEHIESGLVTRSVENAQKKVESMHFESRKHLLEYDDVANEQRKAVYKFRNELLDKSHDISHRIEDNRRDSLLNLLSKADILEGVEKEEYDLDRLLALFTEEYNTPISKELLEGKEYEALLLTLESHLKESYETKMSLVDENQKHDIERLIYLQVLDNAWREHLYLMDNLKTGIGLRGYNQKDPLVEYKKESYNLFIELIENIKFESMKALHSIQLRTKEEQEERQRAQEAAMQRLLSEMNAEANANLQFSHQPQSEVKVSRNDPCPCGSGKKYKNCCGQSGPKKGLLAQA</sequence>
<organism>
    <name type="scientific">Wolinella succinogenes (strain ATCC 29543 / DSM 1740 / CCUG 13145 / JCM 31913 / LMG 7466 / NCTC 11488 / FDC 602W)</name>
    <name type="common">Vibrio succinogenes</name>
    <dbReference type="NCBI Taxonomy" id="273121"/>
    <lineage>
        <taxon>Bacteria</taxon>
        <taxon>Pseudomonadati</taxon>
        <taxon>Campylobacterota</taxon>
        <taxon>Epsilonproteobacteria</taxon>
        <taxon>Campylobacterales</taxon>
        <taxon>Helicobacteraceae</taxon>
        <taxon>Wolinella</taxon>
    </lineage>
</organism>